<accession>Q18BE6</accession>
<organism>
    <name type="scientific">Clostridioides difficile (strain 630)</name>
    <name type="common">Peptoclostridium difficile</name>
    <dbReference type="NCBI Taxonomy" id="272563"/>
    <lineage>
        <taxon>Bacteria</taxon>
        <taxon>Bacillati</taxon>
        <taxon>Bacillota</taxon>
        <taxon>Clostridia</taxon>
        <taxon>Peptostreptococcales</taxon>
        <taxon>Peptostreptococcaceae</taxon>
        <taxon>Clostridioides</taxon>
    </lineage>
</organism>
<proteinExistence type="inferred from homology"/>
<sequence>MEKDLDYTMKFEGIPEDRMSVGDTIDFVYKALVEKGYNPINQIIGYLLSGDSSYITSHKNARAIIKKFERDEILEEVITHYLNRK</sequence>
<keyword id="KW-1185">Reference proteome</keyword>
<dbReference type="EMBL" id="AM180355">
    <property type="protein sequence ID" value="CAJ68139.1"/>
    <property type="molecule type" value="Genomic_DNA"/>
</dbReference>
<dbReference type="RefSeq" id="WP_003419418.1">
    <property type="nucleotide sequence ID" value="NZ_JAUPES010000027.1"/>
</dbReference>
<dbReference type="RefSeq" id="YP_001087777.1">
    <property type="nucleotide sequence ID" value="NC_009089.1"/>
</dbReference>
<dbReference type="SMR" id="Q18BE6"/>
<dbReference type="STRING" id="272563.CD630_12830"/>
<dbReference type="EnsemblBacteria" id="CAJ68139">
    <property type="protein sequence ID" value="CAJ68139"/>
    <property type="gene ID" value="CD630_12830"/>
</dbReference>
<dbReference type="KEGG" id="cdf:CD630_12830"/>
<dbReference type="KEGG" id="pdc:CDIF630_01437"/>
<dbReference type="PATRIC" id="fig|272563.120.peg.1341"/>
<dbReference type="eggNOG" id="COG4472">
    <property type="taxonomic scope" value="Bacteria"/>
</dbReference>
<dbReference type="OrthoDB" id="9796303at2"/>
<dbReference type="PhylomeDB" id="Q18BE6"/>
<dbReference type="BioCyc" id="PDIF272563:G12WB-1417-MONOMER"/>
<dbReference type="Proteomes" id="UP000001978">
    <property type="component" value="Chromosome"/>
</dbReference>
<dbReference type="HAMAP" id="MF_01507">
    <property type="entry name" value="UPF0297"/>
    <property type="match status" value="1"/>
</dbReference>
<dbReference type="InterPro" id="IPR009309">
    <property type="entry name" value="IreB"/>
</dbReference>
<dbReference type="NCBIfam" id="NF003997">
    <property type="entry name" value="PRK05473.1"/>
    <property type="match status" value="1"/>
</dbReference>
<dbReference type="PANTHER" id="PTHR40067">
    <property type="entry name" value="UPF0297 PROTEIN YRZL"/>
    <property type="match status" value="1"/>
</dbReference>
<dbReference type="PANTHER" id="PTHR40067:SF1">
    <property type="entry name" value="UPF0297 PROTEIN YRZL"/>
    <property type="match status" value="1"/>
</dbReference>
<dbReference type="Pfam" id="PF06135">
    <property type="entry name" value="IreB"/>
    <property type="match status" value="1"/>
</dbReference>
<dbReference type="PIRSF" id="PIRSF037258">
    <property type="entry name" value="DUF965_bac"/>
    <property type="match status" value="1"/>
</dbReference>
<name>Y1283_CLOD6</name>
<protein>
    <recommendedName>
        <fullName evidence="1">UPF0297 protein CD630_12830</fullName>
    </recommendedName>
</protein>
<evidence type="ECO:0000255" key="1">
    <source>
        <dbReference type="HAMAP-Rule" id="MF_01507"/>
    </source>
</evidence>
<feature type="chain" id="PRO_0000260067" description="UPF0297 protein CD630_12830">
    <location>
        <begin position="1"/>
        <end position="85"/>
    </location>
</feature>
<comment type="similarity">
    <text evidence="1">Belongs to the UPF0297 family.</text>
</comment>
<reference key="1">
    <citation type="journal article" date="2006" name="Nat. Genet.">
        <title>The multidrug-resistant human pathogen Clostridium difficile has a highly mobile, mosaic genome.</title>
        <authorList>
            <person name="Sebaihia M."/>
            <person name="Wren B.W."/>
            <person name="Mullany P."/>
            <person name="Fairweather N.F."/>
            <person name="Minton N."/>
            <person name="Stabler R."/>
            <person name="Thomson N.R."/>
            <person name="Roberts A.P."/>
            <person name="Cerdeno-Tarraga A.M."/>
            <person name="Wang H."/>
            <person name="Holden M.T.G."/>
            <person name="Wright A."/>
            <person name="Churcher C."/>
            <person name="Quail M.A."/>
            <person name="Baker S."/>
            <person name="Bason N."/>
            <person name="Brooks K."/>
            <person name="Chillingworth T."/>
            <person name="Cronin A."/>
            <person name="Davis P."/>
            <person name="Dowd L."/>
            <person name="Fraser A."/>
            <person name="Feltwell T."/>
            <person name="Hance Z."/>
            <person name="Holroyd S."/>
            <person name="Jagels K."/>
            <person name="Moule S."/>
            <person name="Mungall K."/>
            <person name="Price C."/>
            <person name="Rabbinowitsch E."/>
            <person name="Sharp S."/>
            <person name="Simmonds M."/>
            <person name="Stevens K."/>
            <person name="Unwin L."/>
            <person name="Whithead S."/>
            <person name="Dupuy B."/>
            <person name="Dougan G."/>
            <person name="Barrell B."/>
            <person name="Parkhill J."/>
        </authorList>
    </citation>
    <scope>NUCLEOTIDE SEQUENCE [LARGE SCALE GENOMIC DNA]</scope>
    <source>
        <strain>630</strain>
    </source>
</reference>
<gene>
    <name type="ordered locus">CD630_12830</name>
</gene>